<dbReference type="EC" id="6.3.2.-" evidence="1"/>
<dbReference type="EMBL" id="CP001657">
    <property type="protein sequence ID" value="ACT12731.1"/>
    <property type="molecule type" value="Genomic_DNA"/>
</dbReference>
<dbReference type="RefSeq" id="WP_015839948.1">
    <property type="nucleotide sequence ID" value="NC_012917.1"/>
</dbReference>
<dbReference type="SMR" id="C6DEP6"/>
<dbReference type="STRING" id="561230.PC1_1690"/>
<dbReference type="KEGG" id="pct:PC1_1690"/>
<dbReference type="eggNOG" id="COG0189">
    <property type="taxonomic scope" value="Bacteria"/>
</dbReference>
<dbReference type="HOGENOM" id="CLU_054353_0_1_6"/>
<dbReference type="OrthoDB" id="3865600at2"/>
<dbReference type="Proteomes" id="UP000002736">
    <property type="component" value="Chromosome"/>
</dbReference>
<dbReference type="GO" id="GO:0005737">
    <property type="term" value="C:cytoplasm"/>
    <property type="evidence" value="ECO:0007669"/>
    <property type="project" value="TreeGrafter"/>
</dbReference>
<dbReference type="GO" id="GO:0005524">
    <property type="term" value="F:ATP binding"/>
    <property type="evidence" value="ECO:0007669"/>
    <property type="project" value="UniProtKB-UniRule"/>
</dbReference>
<dbReference type="GO" id="GO:0046872">
    <property type="term" value="F:metal ion binding"/>
    <property type="evidence" value="ECO:0007669"/>
    <property type="project" value="UniProtKB-KW"/>
</dbReference>
<dbReference type="GO" id="GO:0018169">
    <property type="term" value="F:ribosomal S6-glutamic acid ligase activity"/>
    <property type="evidence" value="ECO:0007669"/>
    <property type="project" value="TreeGrafter"/>
</dbReference>
<dbReference type="GO" id="GO:0036211">
    <property type="term" value="P:protein modification process"/>
    <property type="evidence" value="ECO:0007669"/>
    <property type="project" value="InterPro"/>
</dbReference>
<dbReference type="GO" id="GO:0009432">
    <property type="term" value="P:SOS response"/>
    <property type="evidence" value="ECO:0007669"/>
    <property type="project" value="TreeGrafter"/>
</dbReference>
<dbReference type="GO" id="GO:0006412">
    <property type="term" value="P:translation"/>
    <property type="evidence" value="ECO:0007669"/>
    <property type="project" value="UniProtKB-KW"/>
</dbReference>
<dbReference type="FunFam" id="3.40.50.20:FF:000004">
    <property type="entry name" value="Probable alpha-L-glutamate ligase"/>
    <property type="match status" value="1"/>
</dbReference>
<dbReference type="FunFam" id="3.30.1490.20:FF:000005">
    <property type="entry name" value="Probable alpha-L-glutamate ligase 1"/>
    <property type="match status" value="1"/>
</dbReference>
<dbReference type="FunFam" id="3.30.470.20:FF:000016">
    <property type="entry name" value="Ribosomal protein S6--L-glutamate ligase"/>
    <property type="match status" value="1"/>
</dbReference>
<dbReference type="Gene3D" id="3.40.50.20">
    <property type="match status" value="1"/>
</dbReference>
<dbReference type="Gene3D" id="3.30.1490.20">
    <property type="entry name" value="ATP-grasp fold, A domain"/>
    <property type="match status" value="1"/>
</dbReference>
<dbReference type="Gene3D" id="3.30.470.20">
    <property type="entry name" value="ATP-grasp fold, B domain"/>
    <property type="match status" value="1"/>
</dbReference>
<dbReference type="HAMAP" id="MF_01552">
    <property type="entry name" value="RimK"/>
    <property type="match status" value="1"/>
</dbReference>
<dbReference type="InterPro" id="IPR011761">
    <property type="entry name" value="ATP-grasp"/>
</dbReference>
<dbReference type="InterPro" id="IPR013651">
    <property type="entry name" value="ATP-grasp_RimK-type"/>
</dbReference>
<dbReference type="InterPro" id="IPR013815">
    <property type="entry name" value="ATP_grasp_subdomain_1"/>
</dbReference>
<dbReference type="InterPro" id="IPR023533">
    <property type="entry name" value="RimK"/>
</dbReference>
<dbReference type="InterPro" id="IPR041107">
    <property type="entry name" value="Rimk_N"/>
</dbReference>
<dbReference type="InterPro" id="IPR004666">
    <property type="entry name" value="Rp_bS6_RimK/Lys_biosynth_LsyX"/>
</dbReference>
<dbReference type="NCBIfam" id="NF007764">
    <property type="entry name" value="PRK10446.1"/>
    <property type="match status" value="1"/>
</dbReference>
<dbReference type="NCBIfam" id="TIGR00768">
    <property type="entry name" value="rimK_fam"/>
    <property type="match status" value="1"/>
</dbReference>
<dbReference type="PANTHER" id="PTHR21621:SF7">
    <property type="entry name" value="RIBOSOMAL PROTEIN BS6--L-GLUTAMATE LIGASE"/>
    <property type="match status" value="1"/>
</dbReference>
<dbReference type="PANTHER" id="PTHR21621">
    <property type="entry name" value="RIBOSOMAL PROTEIN S6 MODIFICATION PROTEIN"/>
    <property type="match status" value="1"/>
</dbReference>
<dbReference type="Pfam" id="PF08443">
    <property type="entry name" value="RimK"/>
    <property type="match status" value="1"/>
</dbReference>
<dbReference type="Pfam" id="PF18030">
    <property type="entry name" value="Rimk_N"/>
    <property type="match status" value="1"/>
</dbReference>
<dbReference type="SUPFAM" id="SSF56059">
    <property type="entry name" value="Glutathione synthetase ATP-binding domain-like"/>
    <property type="match status" value="1"/>
</dbReference>
<dbReference type="PROSITE" id="PS50975">
    <property type="entry name" value="ATP_GRASP"/>
    <property type="match status" value="1"/>
</dbReference>
<accession>C6DEP6</accession>
<feature type="chain" id="PRO_1000215476" description="Probable alpha-L-glutamate ligase">
    <location>
        <begin position="1"/>
        <end position="303"/>
    </location>
</feature>
<feature type="domain" description="ATP-grasp" evidence="1">
    <location>
        <begin position="104"/>
        <end position="287"/>
    </location>
</feature>
<feature type="binding site" evidence="1">
    <location>
        <position position="141"/>
    </location>
    <ligand>
        <name>ATP</name>
        <dbReference type="ChEBI" id="CHEBI:30616"/>
    </ligand>
</feature>
<feature type="binding site" evidence="1">
    <location>
        <begin position="178"/>
        <end position="179"/>
    </location>
    <ligand>
        <name>ATP</name>
        <dbReference type="ChEBI" id="CHEBI:30616"/>
    </ligand>
</feature>
<feature type="binding site" evidence="1">
    <location>
        <position position="187"/>
    </location>
    <ligand>
        <name>ATP</name>
        <dbReference type="ChEBI" id="CHEBI:30616"/>
    </ligand>
</feature>
<feature type="binding site" evidence="1">
    <location>
        <begin position="211"/>
        <end position="213"/>
    </location>
    <ligand>
        <name>ATP</name>
        <dbReference type="ChEBI" id="CHEBI:30616"/>
    </ligand>
</feature>
<feature type="binding site" evidence="1">
    <location>
        <position position="248"/>
    </location>
    <ligand>
        <name>Mg(2+)</name>
        <dbReference type="ChEBI" id="CHEBI:18420"/>
        <label>1</label>
    </ligand>
</feature>
<feature type="binding site" evidence="1">
    <location>
        <position position="248"/>
    </location>
    <ligand>
        <name>Mn(2+)</name>
        <dbReference type="ChEBI" id="CHEBI:29035"/>
        <label>1</label>
    </ligand>
</feature>
<feature type="binding site" evidence="1">
    <location>
        <position position="260"/>
    </location>
    <ligand>
        <name>Mg(2+)</name>
        <dbReference type="ChEBI" id="CHEBI:18420"/>
        <label>1</label>
    </ligand>
</feature>
<feature type="binding site" evidence="1">
    <location>
        <position position="260"/>
    </location>
    <ligand>
        <name>Mg(2+)</name>
        <dbReference type="ChEBI" id="CHEBI:18420"/>
        <label>2</label>
    </ligand>
</feature>
<feature type="binding site" evidence="1">
    <location>
        <position position="260"/>
    </location>
    <ligand>
        <name>Mn(2+)</name>
        <dbReference type="ChEBI" id="CHEBI:29035"/>
        <label>1</label>
    </ligand>
</feature>
<feature type="binding site" evidence="1">
    <location>
        <position position="260"/>
    </location>
    <ligand>
        <name>Mn(2+)</name>
        <dbReference type="ChEBI" id="CHEBI:29035"/>
        <label>2</label>
    </ligand>
</feature>
<feature type="binding site" evidence="1">
    <location>
        <position position="262"/>
    </location>
    <ligand>
        <name>Mg(2+)</name>
        <dbReference type="ChEBI" id="CHEBI:18420"/>
        <label>2</label>
    </ligand>
</feature>
<feature type="binding site" evidence="1">
    <location>
        <position position="262"/>
    </location>
    <ligand>
        <name>Mn(2+)</name>
        <dbReference type="ChEBI" id="CHEBI:29035"/>
        <label>2</label>
    </ligand>
</feature>
<proteinExistence type="inferred from homology"/>
<sequence>MKIAILSRDGALYSCKRLREAAEARKHSVEIIDPLSCYMNINSAAPSVHYRGRRLDKYDAVIPRIGSQITFYGTAVLRQFEMLGSYPLNNSVAVIRARDKLHSLQLLAREGIDLPITGFAHSPDDTGDLIAMVGGAPLVVKLVEGTQGIGVVLAETRQAAESVIDAFRGLNAHILVQEYVREAQGKDIRCLVIGNRVVAAIERQAKAGEFRSNLHRGGSANNVKITAQERAIAIKATKTLGLNVAGVDILRADRGPLVMEVNASPGLEGIETTTGFDIAGMMIEFIEQNTQRRFATSASISKS</sequence>
<reference key="1">
    <citation type="submission" date="2009-07" db="EMBL/GenBank/DDBJ databases">
        <title>Complete sequence of Pectobacterium carotovorum subsp. carotovorum PC1.</title>
        <authorList>
            <consortium name="US DOE Joint Genome Institute"/>
            <person name="Lucas S."/>
            <person name="Copeland A."/>
            <person name="Lapidus A."/>
            <person name="Glavina del Rio T."/>
            <person name="Tice H."/>
            <person name="Bruce D."/>
            <person name="Goodwin L."/>
            <person name="Pitluck S."/>
            <person name="Munk A.C."/>
            <person name="Brettin T."/>
            <person name="Detter J.C."/>
            <person name="Han C."/>
            <person name="Tapia R."/>
            <person name="Larimer F."/>
            <person name="Land M."/>
            <person name="Hauser L."/>
            <person name="Kyrpides N."/>
            <person name="Mikhailova N."/>
            <person name="Balakrishnan V."/>
            <person name="Glasner J."/>
            <person name="Perna N.T."/>
        </authorList>
    </citation>
    <scope>NUCLEOTIDE SEQUENCE [LARGE SCALE GENOMIC DNA]</scope>
    <source>
        <strain>PC1</strain>
    </source>
</reference>
<comment type="cofactor">
    <cofactor evidence="1">
        <name>Mg(2+)</name>
        <dbReference type="ChEBI" id="CHEBI:18420"/>
    </cofactor>
    <cofactor evidence="1">
        <name>Mn(2+)</name>
        <dbReference type="ChEBI" id="CHEBI:29035"/>
    </cofactor>
    <text evidence="1">Binds 2 magnesium or manganese ions per subunit.</text>
</comment>
<comment type="similarity">
    <text evidence="1">Belongs to the RimK family.</text>
</comment>
<organism>
    <name type="scientific">Pectobacterium carotovorum subsp. carotovorum (strain PC1)</name>
    <dbReference type="NCBI Taxonomy" id="561230"/>
    <lineage>
        <taxon>Bacteria</taxon>
        <taxon>Pseudomonadati</taxon>
        <taxon>Pseudomonadota</taxon>
        <taxon>Gammaproteobacteria</taxon>
        <taxon>Enterobacterales</taxon>
        <taxon>Pectobacteriaceae</taxon>
        <taxon>Pectobacterium</taxon>
    </lineage>
</organism>
<protein>
    <recommendedName>
        <fullName evidence="1">Probable alpha-L-glutamate ligase</fullName>
        <ecNumber evidence="1">6.3.2.-</ecNumber>
    </recommendedName>
</protein>
<gene>
    <name evidence="1" type="primary">rimK</name>
    <name type="ordered locus">PC1_1690</name>
</gene>
<keyword id="KW-0067">ATP-binding</keyword>
<keyword id="KW-0436">Ligase</keyword>
<keyword id="KW-0460">Magnesium</keyword>
<keyword id="KW-0464">Manganese</keyword>
<keyword id="KW-0479">Metal-binding</keyword>
<keyword id="KW-0547">Nucleotide-binding</keyword>
<keyword id="KW-0648">Protein biosynthesis</keyword>
<name>RIMK_PECCP</name>
<evidence type="ECO:0000255" key="1">
    <source>
        <dbReference type="HAMAP-Rule" id="MF_01552"/>
    </source>
</evidence>